<sequence>MEPSPLELPVDAVRRIAAELNCDPTDERVALRLDEEDKLSHFRNCFYIPKMRDLPSIDLSLVSEDDDAIYFLGNSLGLQPKMVRTYLEEELDKWAKMGAYGHDVGKRPWIVGDESIVSLMKDIVGAHEKEIALMNALTINLHLLLLSFFKPTPKRHKILLEAKAFPSDHYAIESQIQLHGLDVEKSMRMVKPREGEETLRMEDILEVIEEEGDSIAVILFSGLHFYTGQLFNIPAITKAGHAKGCFVGFDLAHAVGNVELRLHDWGVDFACWCSYKYLNSGAGGLAGAFVHEKHAHTVKPALVGWFGHDLSTRFNMDNKLQLIPGANGFRISNPPILLVCSLHASLEVFQQATMTALRRKSILLTGYLEYMLKHYHSKDNTENKGPIVNIITPSRAEERGCQLTLTFSIPKKSVFKELEKRGVVCDKREPDGIRVAPVPLYNSFHDVYKFIRLLTSILDSSERS</sequence>
<proteinExistence type="evidence at protein level"/>
<accession>Q9CXF0</accession>
<reference key="1">
    <citation type="journal article" date="2005" name="Science">
        <title>The transcriptional landscape of the mammalian genome.</title>
        <authorList>
            <person name="Carninci P."/>
            <person name="Kasukawa T."/>
            <person name="Katayama S."/>
            <person name="Gough J."/>
            <person name="Frith M.C."/>
            <person name="Maeda N."/>
            <person name="Oyama R."/>
            <person name="Ravasi T."/>
            <person name="Lenhard B."/>
            <person name="Wells C."/>
            <person name="Kodzius R."/>
            <person name="Shimokawa K."/>
            <person name="Bajic V.B."/>
            <person name="Brenner S.E."/>
            <person name="Batalov S."/>
            <person name="Forrest A.R."/>
            <person name="Zavolan M."/>
            <person name="Davis M.J."/>
            <person name="Wilming L.G."/>
            <person name="Aidinis V."/>
            <person name="Allen J.E."/>
            <person name="Ambesi-Impiombato A."/>
            <person name="Apweiler R."/>
            <person name="Aturaliya R.N."/>
            <person name="Bailey T.L."/>
            <person name="Bansal M."/>
            <person name="Baxter L."/>
            <person name="Beisel K.W."/>
            <person name="Bersano T."/>
            <person name="Bono H."/>
            <person name="Chalk A.M."/>
            <person name="Chiu K.P."/>
            <person name="Choudhary V."/>
            <person name="Christoffels A."/>
            <person name="Clutterbuck D.R."/>
            <person name="Crowe M.L."/>
            <person name="Dalla E."/>
            <person name="Dalrymple B.P."/>
            <person name="de Bono B."/>
            <person name="Della Gatta G."/>
            <person name="di Bernardo D."/>
            <person name="Down T."/>
            <person name="Engstrom P."/>
            <person name="Fagiolini M."/>
            <person name="Faulkner G."/>
            <person name="Fletcher C.F."/>
            <person name="Fukushima T."/>
            <person name="Furuno M."/>
            <person name="Futaki S."/>
            <person name="Gariboldi M."/>
            <person name="Georgii-Hemming P."/>
            <person name="Gingeras T.R."/>
            <person name="Gojobori T."/>
            <person name="Green R.E."/>
            <person name="Gustincich S."/>
            <person name="Harbers M."/>
            <person name="Hayashi Y."/>
            <person name="Hensch T.K."/>
            <person name="Hirokawa N."/>
            <person name="Hill D."/>
            <person name="Huminiecki L."/>
            <person name="Iacono M."/>
            <person name="Ikeo K."/>
            <person name="Iwama A."/>
            <person name="Ishikawa T."/>
            <person name="Jakt M."/>
            <person name="Kanapin A."/>
            <person name="Katoh M."/>
            <person name="Kawasawa Y."/>
            <person name="Kelso J."/>
            <person name="Kitamura H."/>
            <person name="Kitano H."/>
            <person name="Kollias G."/>
            <person name="Krishnan S.P."/>
            <person name="Kruger A."/>
            <person name="Kummerfeld S.K."/>
            <person name="Kurochkin I.V."/>
            <person name="Lareau L.F."/>
            <person name="Lazarevic D."/>
            <person name="Lipovich L."/>
            <person name="Liu J."/>
            <person name="Liuni S."/>
            <person name="McWilliam S."/>
            <person name="Madan Babu M."/>
            <person name="Madera M."/>
            <person name="Marchionni L."/>
            <person name="Matsuda H."/>
            <person name="Matsuzawa S."/>
            <person name="Miki H."/>
            <person name="Mignone F."/>
            <person name="Miyake S."/>
            <person name="Morris K."/>
            <person name="Mottagui-Tabar S."/>
            <person name="Mulder N."/>
            <person name="Nakano N."/>
            <person name="Nakauchi H."/>
            <person name="Ng P."/>
            <person name="Nilsson R."/>
            <person name="Nishiguchi S."/>
            <person name="Nishikawa S."/>
            <person name="Nori F."/>
            <person name="Ohara O."/>
            <person name="Okazaki Y."/>
            <person name="Orlando V."/>
            <person name="Pang K.C."/>
            <person name="Pavan W.J."/>
            <person name="Pavesi G."/>
            <person name="Pesole G."/>
            <person name="Petrovsky N."/>
            <person name="Piazza S."/>
            <person name="Reed J."/>
            <person name="Reid J.F."/>
            <person name="Ring B.Z."/>
            <person name="Ringwald M."/>
            <person name="Rost B."/>
            <person name="Ruan Y."/>
            <person name="Salzberg S.L."/>
            <person name="Sandelin A."/>
            <person name="Schneider C."/>
            <person name="Schoenbach C."/>
            <person name="Sekiguchi K."/>
            <person name="Semple C.A."/>
            <person name="Seno S."/>
            <person name="Sessa L."/>
            <person name="Sheng Y."/>
            <person name="Shibata Y."/>
            <person name="Shimada H."/>
            <person name="Shimada K."/>
            <person name="Silva D."/>
            <person name="Sinclair B."/>
            <person name="Sperling S."/>
            <person name="Stupka E."/>
            <person name="Sugiura K."/>
            <person name="Sultana R."/>
            <person name="Takenaka Y."/>
            <person name="Taki K."/>
            <person name="Tammoja K."/>
            <person name="Tan S.L."/>
            <person name="Tang S."/>
            <person name="Taylor M.S."/>
            <person name="Tegner J."/>
            <person name="Teichmann S.A."/>
            <person name="Ueda H.R."/>
            <person name="van Nimwegen E."/>
            <person name="Verardo R."/>
            <person name="Wei C.L."/>
            <person name="Yagi K."/>
            <person name="Yamanishi H."/>
            <person name="Zabarovsky E."/>
            <person name="Zhu S."/>
            <person name="Zimmer A."/>
            <person name="Hide W."/>
            <person name="Bult C."/>
            <person name="Grimmond S.M."/>
            <person name="Teasdale R.D."/>
            <person name="Liu E.T."/>
            <person name="Brusic V."/>
            <person name="Quackenbush J."/>
            <person name="Wahlestedt C."/>
            <person name="Mattick J.S."/>
            <person name="Hume D.A."/>
            <person name="Kai C."/>
            <person name="Sasaki D."/>
            <person name="Tomaru Y."/>
            <person name="Fukuda S."/>
            <person name="Kanamori-Katayama M."/>
            <person name="Suzuki M."/>
            <person name="Aoki J."/>
            <person name="Arakawa T."/>
            <person name="Iida J."/>
            <person name="Imamura K."/>
            <person name="Itoh M."/>
            <person name="Kato T."/>
            <person name="Kawaji H."/>
            <person name="Kawagashira N."/>
            <person name="Kawashima T."/>
            <person name="Kojima M."/>
            <person name="Kondo S."/>
            <person name="Konno H."/>
            <person name="Nakano K."/>
            <person name="Ninomiya N."/>
            <person name="Nishio T."/>
            <person name="Okada M."/>
            <person name="Plessy C."/>
            <person name="Shibata K."/>
            <person name="Shiraki T."/>
            <person name="Suzuki S."/>
            <person name="Tagami M."/>
            <person name="Waki K."/>
            <person name="Watahiki A."/>
            <person name="Okamura-Oho Y."/>
            <person name="Suzuki H."/>
            <person name="Kawai J."/>
            <person name="Hayashizaki Y."/>
        </authorList>
    </citation>
    <scope>NUCLEOTIDE SEQUENCE [LARGE SCALE MRNA]</scope>
    <source>
        <strain>C57BL/6J</strain>
        <tissue>Liver</tissue>
    </source>
</reference>
<reference key="2">
    <citation type="journal article" date="2010" name="Cell">
        <title>A tissue-specific atlas of mouse protein phosphorylation and expression.</title>
        <authorList>
            <person name="Huttlin E.L."/>
            <person name="Jedrychowski M.P."/>
            <person name="Elias J.E."/>
            <person name="Goswami T."/>
            <person name="Rad R."/>
            <person name="Beausoleil S.A."/>
            <person name="Villen J."/>
            <person name="Haas W."/>
            <person name="Sowa M.E."/>
            <person name="Gygi S.P."/>
        </authorList>
    </citation>
    <scope>IDENTIFICATION BY MASS SPECTROMETRY [LARGE SCALE ANALYSIS]</scope>
    <source>
        <tissue>Liver</tissue>
        <tissue>Spleen</tissue>
    </source>
</reference>
<reference key="3">
    <citation type="journal article" date="2017" name="N. Engl. J. Med.">
        <title>NAD deficiency, congenital malformations, and niacin supplementation.</title>
        <authorList>
            <person name="Shi H."/>
            <person name="Enriquez A."/>
            <person name="Rapadas M."/>
            <person name="Martin E.M.M.A."/>
            <person name="Wang R."/>
            <person name="Moreau J."/>
            <person name="Lim C.K."/>
            <person name="Szot J.O."/>
            <person name="Ip E."/>
            <person name="Hughes J.N."/>
            <person name="Sugimoto K."/>
            <person name="Humphreys D.T."/>
            <person name="McInerney-Leo A.M."/>
            <person name="Leo P.J."/>
            <person name="Maghzal G.J."/>
            <person name="Halliday J."/>
            <person name="Smith J."/>
            <person name="Colley A."/>
            <person name="Mark P.R."/>
            <person name="Collins F."/>
            <person name="Sillence D.O."/>
            <person name="Winlaw D.S."/>
            <person name="Ho J.W.K."/>
            <person name="Guillemin G.J."/>
            <person name="Brown M.A."/>
            <person name="Kikuchi K."/>
            <person name="Thomas P.Q."/>
            <person name="Stocker R."/>
            <person name="Giannoulatou E."/>
            <person name="Chapman G."/>
            <person name="Duncan E.L."/>
            <person name="Sparrow D.B."/>
            <person name="Dunwoodie S.L."/>
        </authorList>
    </citation>
    <scope>PATHWAY</scope>
    <scope>DISRUPTION PHENOTYPE</scope>
</reference>
<keyword id="KW-0007">Acetylation</keyword>
<keyword id="KW-0963">Cytoplasm</keyword>
<keyword id="KW-0378">Hydrolase</keyword>
<keyword id="KW-0662">Pyridine nucleotide biosynthesis</keyword>
<keyword id="KW-0663">Pyridoxal phosphate</keyword>
<keyword id="KW-1185">Reference proteome</keyword>
<name>KYNU_MOUSE</name>
<evidence type="ECO:0000250" key="1">
    <source>
        <dbReference type="UniProtKB" id="Q16719"/>
    </source>
</evidence>
<evidence type="ECO:0000255" key="2">
    <source>
        <dbReference type="HAMAP-Rule" id="MF_03017"/>
    </source>
</evidence>
<evidence type="ECO:0000269" key="3">
    <source>
    </source>
</evidence>
<evidence type="ECO:0000305" key="4"/>
<organism>
    <name type="scientific">Mus musculus</name>
    <name type="common">Mouse</name>
    <dbReference type="NCBI Taxonomy" id="10090"/>
    <lineage>
        <taxon>Eukaryota</taxon>
        <taxon>Metazoa</taxon>
        <taxon>Chordata</taxon>
        <taxon>Craniata</taxon>
        <taxon>Vertebrata</taxon>
        <taxon>Euteleostomi</taxon>
        <taxon>Mammalia</taxon>
        <taxon>Eutheria</taxon>
        <taxon>Euarchontoglires</taxon>
        <taxon>Glires</taxon>
        <taxon>Rodentia</taxon>
        <taxon>Myomorpha</taxon>
        <taxon>Muroidea</taxon>
        <taxon>Muridae</taxon>
        <taxon>Murinae</taxon>
        <taxon>Mus</taxon>
        <taxon>Mus</taxon>
    </lineage>
</organism>
<comment type="function">
    <text evidence="2">Catalyzes the cleavage of L-kynurenine (L-Kyn) and L-3-hydroxykynurenine (L-3OHKyn) into anthranilic acid (AA) and 3-hydroxyanthranilic acid (3-OHAA), respectively. Has a preference for the L-3-hydroxy form. Also has cysteine-conjugate-beta-lyase activity.</text>
</comment>
<comment type="catalytic activity">
    <reaction evidence="2">
        <text>L-kynurenine + H2O = anthranilate + L-alanine + H(+)</text>
        <dbReference type="Rhea" id="RHEA:16813"/>
        <dbReference type="ChEBI" id="CHEBI:15377"/>
        <dbReference type="ChEBI" id="CHEBI:15378"/>
        <dbReference type="ChEBI" id="CHEBI:16567"/>
        <dbReference type="ChEBI" id="CHEBI:57959"/>
        <dbReference type="ChEBI" id="CHEBI:57972"/>
        <dbReference type="EC" id="3.7.1.3"/>
    </reaction>
</comment>
<comment type="catalytic activity">
    <reaction evidence="2">
        <text>3-hydroxy-L-kynurenine + H2O = 3-hydroxyanthranilate + L-alanine + H(+)</text>
        <dbReference type="Rhea" id="RHEA:25143"/>
        <dbReference type="ChEBI" id="CHEBI:15377"/>
        <dbReference type="ChEBI" id="CHEBI:15378"/>
        <dbReference type="ChEBI" id="CHEBI:36559"/>
        <dbReference type="ChEBI" id="CHEBI:57972"/>
        <dbReference type="ChEBI" id="CHEBI:58125"/>
        <dbReference type="EC" id="3.7.1.3"/>
    </reaction>
</comment>
<comment type="cofactor">
    <cofactor evidence="2">
        <name>pyridoxal 5'-phosphate</name>
        <dbReference type="ChEBI" id="CHEBI:597326"/>
    </cofactor>
</comment>
<comment type="pathway">
    <text evidence="2 3">Amino-acid degradation; L-kynurenine degradation; L-alanine and anthranilate from L-kynurenine: step 1/1.</text>
</comment>
<comment type="pathway">
    <text evidence="2">Cofactor biosynthesis; NAD(+) biosynthesis; quinolinate from L-kynurenine: step 2/3.</text>
</comment>
<comment type="subunit">
    <text evidence="2">Homodimer.</text>
</comment>
<comment type="subcellular location">
    <subcellularLocation>
        <location evidence="2">Cytoplasm</location>
        <location evidence="2">Cytosol</location>
    </subcellularLocation>
</comment>
<comment type="disruption phenotype">
    <text evidence="3">No visible phenotype. Mice were born at the expected Mendelian ratio and are normal. They however show very high levels of L-3-hydroxykynurenine compared to wild-type mice.</text>
</comment>
<comment type="similarity">
    <text evidence="2">Belongs to the kynureninase family.</text>
</comment>
<comment type="sequence caution" evidence="4">
    <conflict type="erroneous initiation">
        <sequence resource="EMBL-CDS" id="BAB29386"/>
    </conflict>
</comment>
<comment type="sequence caution" evidence="4">
    <conflict type="erroneous initiation">
        <sequence resource="EMBL-CDS" id="BAC34035"/>
    </conflict>
</comment>
<protein>
    <recommendedName>
        <fullName evidence="2">Kynureninase</fullName>
        <ecNumber evidence="2">3.7.1.3</ecNumber>
    </recommendedName>
    <alternativeName>
        <fullName evidence="2">L-kynurenine hydrolase</fullName>
    </alternativeName>
</protein>
<gene>
    <name type="primary">Kynu</name>
</gene>
<feature type="chain" id="PRO_0000218658" description="Kynureninase">
    <location>
        <begin position="1"/>
        <end position="464"/>
    </location>
</feature>
<feature type="binding site" evidence="2">
    <location>
        <position position="137"/>
    </location>
    <ligand>
        <name>pyridoxal 5'-phosphate</name>
        <dbReference type="ChEBI" id="CHEBI:597326"/>
    </ligand>
</feature>
<feature type="binding site" evidence="2">
    <location>
        <position position="138"/>
    </location>
    <ligand>
        <name>pyridoxal 5'-phosphate</name>
        <dbReference type="ChEBI" id="CHEBI:597326"/>
    </ligand>
</feature>
<feature type="binding site" evidence="2">
    <location>
        <begin position="165"/>
        <end position="168"/>
    </location>
    <ligand>
        <name>pyridoxal 5'-phosphate</name>
        <dbReference type="ChEBI" id="CHEBI:597326"/>
    </ligand>
</feature>
<feature type="binding site" evidence="2">
    <location>
        <position position="221"/>
    </location>
    <ligand>
        <name>pyridoxal 5'-phosphate</name>
        <dbReference type="ChEBI" id="CHEBI:597326"/>
    </ligand>
</feature>
<feature type="binding site" evidence="2">
    <location>
        <position position="250"/>
    </location>
    <ligand>
        <name>pyridoxal 5'-phosphate</name>
        <dbReference type="ChEBI" id="CHEBI:597326"/>
    </ligand>
</feature>
<feature type="binding site" evidence="2">
    <location>
        <position position="253"/>
    </location>
    <ligand>
        <name>pyridoxal 5'-phosphate</name>
        <dbReference type="ChEBI" id="CHEBI:597326"/>
    </ligand>
</feature>
<feature type="binding site" evidence="2">
    <location>
        <position position="275"/>
    </location>
    <ligand>
        <name>pyridoxal 5'-phosphate</name>
        <dbReference type="ChEBI" id="CHEBI:597326"/>
    </ligand>
</feature>
<feature type="binding site" evidence="2">
    <location>
        <position position="305"/>
    </location>
    <ligand>
        <name>pyridoxal 5'-phosphate</name>
        <dbReference type="ChEBI" id="CHEBI:597326"/>
    </ligand>
</feature>
<feature type="binding site" evidence="2">
    <location>
        <position position="333"/>
    </location>
    <ligand>
        <name>pyridoxal 5'-phosphate</name>
        <dbReference type="ChEBI" id="CHEBI:597326"/>
    </ligand>
</feature>
<feature type="modified residue" description="N-acetylmethionine" evidence="1 2">
    <location>
        <position position="1"/>
    </location>
</feature>
<feature type="modified residue" description="N6-(pyridoxal phosphate)lysine" evidence="2">
    <location>
        <position position="276"/>
    </location>
</feature>
<dbReference type="EC" id="3.7.1.3" evidence="2"/>
<dbReference type="EMBL" id="AK014484">
    <property type="protein sequence ID" value="BAB29386.2"/>
    <property type="status" value="ALT_INIT"/>
    <property type="molecule type" value="mRNA"/>
</dbReference>
<dbReference type="EMBL" id="AK050024">
    <property type="protein sequence ID" value="BAC34035.1"/>
    <property type="status" value="ALT_INIT"/>
    <property type="molecule type" value="mRNA"/>
</dbReference>
<dbReference type="CCDS" id="CCDS16018.1"/>
<dbReference type="RefSeq" id="NP_001276522.1">
    <property type="nucleotide sequence ID" value="NM_001289593.1"/>
</dbReference>
<dbReference type="RefSeq" id="NP_001276523.1">
    <property type="nucleotide sequence ID" value="NM_001289594.1"/>
</dbReference>
<dbReference type="RefSeq" id="NP_001385605.1">
    <property type="nucleotide sequence ID" value="NM_001398676.1"/>
</dbReference>
<dbReference type="RefSeq" id="NP_081828.2">
    <property type="nucleotide sequence ID" value="NM_027552.3"/>
</dbReference>
<dbReference type="RefSeq" id="XP_006498388.1">
    <property type="nucleotide sequence ID" value="XM_006498325.3"/>
</dbReference>
<dbReference type="SMR" id="Q9CXF0"/>
<dbReference type="BioGRID" id="214254">
    <property type="interactions" value="2"/>
</dbReference>
<dbReference type="FunCoup" id="Q9CXF0">
    <property type="interactions" value="1140"/>
</dbReference>
<dbReference type="STRING" id="10090.ENSMUSP00000028223"/>
<dbReference type="GlyGen" id="Q9CXF0">
    <property type="glycosylation" value="1 site, 1 O-linked glycan (1 site)"/>
</dbReference>
<dbReference type="iPTMnet" id="Q9CXF0"/>
<dbReference type="PhosphoSitePlus" id="Q9CXF0"/>
<dbReference type="SwissPalm" id="Q9CXF0"/>
<dbReference type="jPOST" id="Q9CXF0"/>
<dbReference type="PaxDb" id="10090-ENSMUSP00000028223"/>
<dbReference type="ProteomicsDB" id="290005"/>
<dbReference type="Ensembl" id="ENSMUST00000028223.10">
    <property type="protein sequence ID" value="ENSMUSP00000028223.4"/>
    <property type="gene ID" value="ENSMUSG00000026866.18"/>
</dbReference>
<dbReference type="Ensembl" id="ENSMUST00000240759.1">
    <property type="protein sequence ID" value="ENSMUSP00000159520.1"/>
    <property type="gene ID" value="ENSMUSG00000026866.18"/>
</dbReference>
<dbReference type="GeneID" id="70789"/>
<dbReference type="KEGG" id="mmu:70789"/>
<dbReference type="AGR" id="MGI:1918039"/>
<dbReference type="CTD" id="8942"/>
<dbReference type="MGI" id="MGI:1918039">
    <property type="gene designation" value="Kynu"/>
</dbReference>
<dbReference type="eggNOG" id="KOG3846">
    <property type="taxonomic scope" value="Eukaryota"/>
</dbReference>
<dbReference type="GeneTree" id="ENSGT00390000008033"/>
<dbReference type="InParanoid" id="Q9CXF0"/>
<dbReference type="OMA" id="LPGWNSH"/>
<dbReference type="OrthoDB" id="5978656at2759"/>
<dbReference type="Reactome" id="R-MMU-71240">
    <property type="pathway name" value="Tryptophan catabolism"/>
</dbReference>
<dbReference type="UniPathway" id="UPA00253">
    <property type="reaction ID" value="UER00329"/>
</dbReference>
<dbReference type="UniPathway" id="UPA00334">
    <property type="reaction ID" value="UER00455"/>
</dbReference>
<dbReference type="BioGRID-ORCS" id="70789">
    <property type="hits" value="1 hit in 79 CRISPR screens"/>
</dbReference>
<dbReference type="ChiTaRS" id="Kynu">
    <property type="organism name" value="mouse"/>
</dbReference>
<dbReference type="PRO" id="PR:Q9CXF0"/>
<dbReference type="Proteomes" id="UP000000589">
    <property type="component" value="Chromosome 2"/>
</dbReference>
<dbReference type="RNAct" id="Q9CXF0">
    <property type="molecule type" value="protein"/>
</dbReference>
<dbReference type="GO" id="GO:0005829">
    <property type="term" value="C:cytosol"/>
    <property type="evidence" value="ECO:0007669"/>
    <property type="project" value="UniProtKB-SubCell"/>
</dbReference>
<dbReference type="GO" id="GO:0005739">
    <property type="term" value="C:mitochondrion"/>
    <property type="evidence" value="ECO:0007005"/>
    <property type="project" value="MGI"/>
</dbReference>
<dbReference type="GO" id="GO:0005654">
    <property type="term" value="C:nucleoplasm"/>
    <property type="evidence" value="ECO:0007669"/>
    <property type="project" value="Ensembl"/>
</dbReference>
<dbReference type="GO" id="GO:0030429">
    <property type="term" value="F:kynureninase activity"/>
    <property type="evidence" value="ECO:0000250"/>
    <property type="project" value="UniProtKB"/>
</dbReference>
<dbReference type="GO" id="GO:0042803">
    <property type="term" value="F:protein homodimerization activity"/>
    <property type="evidence" value="ECO:0007669"/>
    <property type="project" value="Ensembl"/>
</dbReference>
<dbReference type="GO" id="GO:0030170">
    <property type="term" value="F:pyridoxal phosphate binding"/>
    <property type="evidence" value="ECO:0007669"/>
    <property type="project" value="UniProtKB-UniRule"/>
</dbReference>
<dbReference type="GO" id="GO:0034354">
    <property type="term" value="P:'de novo' NAD biosynthetic process from L-tryptophan"/>
    <property type="evidence" value="ECO:0007669"/>
    <property type="project" value="UniProtKB-UniRule"/>
</dbReference>
<dbReference type="GO" id="GO:0043420">
    <property type="term" value="P:anthranilate metabolic process"/>
    <property type="evidence" value="ECO:0007669"/>
    <property type="project" value="UniProtKB-UniRule"/>
</dbReference>
<dbReference type="GO" id="GO:0097053">
    <property type="term" value="P:L-kynurenine catabolic process"/>
    <property type="evidence" value="ECO:0007669"/>
    <property type="project" value="UniProtKB-UniRule"/>
</dbReference>
<dbReference type="GO" id="GO:0006569">
    <property type="term" value="P:L-tryptophan catabolic process"/>
    <property type="evidence" value="ECO:0007669"/>
    <property type="project" value="UniProtKB-UniRule"/>
</dbReference>
<dbReference type="GO" id="GO:0009435">
    <property type="term" value="P:NAD biosynthetic process"/>
    <property type="evidence" value="ECO:0000250"/>
    <property type="project" value="UniProtKB"/>
</dbReference>
<dbReference type="GO" id="GO:0019805">
    <property type="term" value="P:quinolinate biosynthetic process"/>
    <property type="evidence" value="ECO:0007669"/>
    <property type="project" value="UniProtKB-UniRule"/>
</dbReference>
<dbReference type="GO" id="GO:0034341">
    <property type="term" value="P:response to type II interferon"/>
    <property type="evidence" value="ECO:0007669"/>
    <property type="project" value="Ensembl"/>
</dbReference>
<dbReference type="GO" id="GO:0034516">
    <property type="term" value="P:response to vitamin B6"/>
    <property type="evidence" value="ECO:0007669"/>
    <property type="project" value="Ensembl"/>
</dbReference>
<dbReference type="FunFam" id="3.40.640.10:FF:000031">
    <property type="entry name" value="Kynureninase"/>
    <property type="match status" value="1"/>
</dbReference>
<dbReference type="FunFam" id="3.90.1150.10:FF:000203">
    <property type="entry name" value="Kynureninase"/>
    <property type="match status" value="1"/>
</dbReference>
<dbReference type="Gene3D" id="3.90.1150.10">
    <property type="entry name" value="Aspartate Aminotransferase, domain 1"/>
    <property type="match status" value="1"/>
</dbReference>
<dbReference type="Gene3D" id="3.40.640.10">
    <property type="entry name" value="Type I PLP-dependent aspartate aminotransferase-like (Major domain)"/>
    <property type="match status" value="1"/>
</dbReference>
<dbReference type="HAMAP" id="MF_01970">
    <property type="entry name" value="Kynureninase"/>
    <property type="match status" value="1"/>
</dbReference>
<dbReference type="InterPro" id="IPR010111">
    <property type="entry name" value="Kynureninase"/>
</dbReference>
<dbReference type="InterPro" id="IPR015424">
    <property type="entry name" value="PyrdxlP-dep_Trfase"/>
</dbReference>
<dbReference type="InterPro" id="IPR015421">
    <property type="entry name" value="PyrdxlP-dep_Trfase_major"/>
</dbReference>
<dbReference type="InterPro" id="IPR015422">
    <property type="entry name" value="PyrdxlP-dep_Trfase_small"/>
</dbReference>
<dbReference type="NCBIfam" id="TIGR01814">
    <property type="entry name" value="kynureninase"/>
    <property type="match status" value="1"/>
</dbReference>
<dbReference type="PANTHER" id="PTHR14084">
    <property type="entry name" value="KYNURENINASE"/>
    <property type="match status" value="1"/>
</dbReference>
<dbReference type="PANTHER" id="PTHR14084:SF0">
    <property type="entry name" value="KYNURENINASE"/>
    <property type="match status" value="1"/>
</dbReference>
<dbReference type="Pfam" id="PF22580">
    <property type="entry name" value="KYNU_C"/>
    <property type="match status" value="1"/>
</dbReference>
<dbReference type="PIRSF" id="PIRSF038800">
    <property type="entry name" value="KYNU"/>
    <property type="match status" value="1"/>
</dbReference>
<dbReference type="SUPFAM" id="SSF53383">
    <property type="entry name" value="PLP-dependent transferases"/>
    <property type="match status" value="1"/>
</dbReference>